<name>PTN20_RAT</name>
<feature type="chain" id="PRO_0000295757" description="Tyrosine-protein phosphatase non-receptor type 20">
    <location>
        <begin position="1"/>
        <end position="421"/>
    </location>
</feature>
<feature type="domain" description="Tyrosine-protein phosphatase" evidence="2">
    <location>
        <begin position="160"/>
        <end position="413"/>
    </location>
</feature>
<feature type="region of interest" description="Disordered" evidence="4">
    <location>
        <begin position="1"/>
        <end position="58"/>
    </location>
</feature>
<feature type="region of interest" description="Disordered" evidence="4">
    <location>
        <begin position="93"/>
        <end position="116"/>
    </location>
</feature>
<feature type="compositionally biased region" description="Low complexity" evidence="4">
    <location>
        <begin position="27"/>
        <end position="41"/>
    </location>
</feature>
<feature type="compositionally biased region" description="Polar residues" evidence="4">
    <location>
        <begin position="48"/>
        <end position="58"/>
    </location>
</feature>
<feature type="compositionally biased region" description="Polar residues" evidence="4">
    <location>
        <begin position="104"/>
        <end position="116"/>
    </location>
</feature>
<feature type="active site" description="Phosphocysteine intermediate" evidence="2 3">
    <location>
        <position position="354"/>
    </location>
</feature>
<feature type="binding site" evidence="1">
    <location>
        <position position="324"/>
    </location>
    <ligand>
        <name>substrate</name>
    </ligand>
</feature>
<feature type="binding site" evidence="1">
    <location>
        <begin position="354"/>
        <end position="360"/>
    </location>
    <ligand>
        <name>substrate</name>
    </ligand>
</feature>
<feature type="binding site" evidence="1">
    <location>
        <position position="398"/>
    </location>
    <ligand>
        <name>substrate</name>
    </ligand>
</feature>
<feature type="modified residue" description="Phosphoserine" evidence="7">
    <location>
        <position position="76"/>
    </location>
</feature>
<feature type="modified residue" description="Phosphoserine" evidence="6">
    <location>
        <position position="122"/>
    </location>
</feature>
<protein>
    <recommendedName>
        <fullName>Tyrosine-protein phosphatase non-receptor type 20</fullName>
        <ecNumber>3.1.3.48</ecNumber>
    </recommendedName>
</protein>
<gene>
    <name type="primary">Ptpn20</name>
</gene>
<proteinExistence type="evidence at protein level"/>
<accession>A1L1L3</accession>
<comment type="function">
    <text evidence="1">Tyrosine-protein phosphatase targeted to sites of actin polymerization in response of varied extracellular stimuli. Has tyrosine phosphatase activity towards various tyrosyl phosphorylated substrates (By similarity).</text>
</comment>
<comment type="catalytic activity">
    <reaction evidence="3">
        <text>O-phospho-L-tyrosyl-[protein] + H2O = L-tyrosyl-[protein] + phosphate</text>
        <dbReference type="Rhea" id="RHEA:10684"/>
        <dbReference type="Rhea" id="RHEA-COMP:10136"/>
        <dbReference type="Rhea" id="RHEA-COMP:20101"/>
        <dbReference type="ChEBI" id="CHEBI:15377"/>
        <dbReference type="ChEBI" id="CHEBI:43474"/>
        <dbReference type="ChEBI" id="CHEBI:46858"/>
        <dbReference type="ChEBI" id="CHEBI:61978"/>
        <dbReference type="EC" id="3.1.3.48"/>
    </reaction>
</comment>
<comment type="subcellular location">
    <subcellularLocation>
        <location evidence="1">Nucleus</location>
    </subcellularLocation>
    <subcellularLocation>
        <location evidence="1">Cytoplasm</location>
    </subcellularLocation>
    <subcellularLocation>
        <location evidence="1">Cytoplasm</location>
        <location evidence="1">Cytoskeleton</location>
        <location evidence="1">Microtubule organizing center</location>
        <location evidence="1">Centrosome</location>
    </subcellularLocation>
    <text evidence="1">Colocalizes with the microtubule-organizing center and intracellular membrane compartments.</text>
</comment>
<comment type="similarity">
    <text evidence="5">Belongs to the protein-tyrosine phosphatase family. Non-receptor class subfamily.</text>
</comment>
<evidence type="ECO:0000250" key="1"/>
<evidence type="ECO:0000255" key="2">
    <source>
        <dbReference type="PROSITE-ProRule" id="PRU00160"/>
    </source>
</evidence>
<evidence type="ECO:0000255" key="3">
    <source>
        <dbReference type="PROSITE-ProRule" id="PRU10044"/>
    </source>
</evidence>
<evidence type="ECO:0000256" key="4">
    <source>
        <dbReference type="SAM" id="MobiDB-lite"/>
    </source>
</evidence>
<evidence type="ECO:0000305" key="5"/>
<evidence type="ECO:0007744" key="6">
    <source>
    </source>
</evidence>
<evidence type="ECO:0007744" key="7">
    <source>
    </source>
</evidence>
<keyword id="KW-0963">Cytoplasm</keyword>
<keyword id="KW-0206">Cytoskeleton</keyword>
<keyword id="KW-0378">Hydrolase</keyword>
<keyword id="KW-0493">Microtubule</keyword>
<keyword id="KW-0539">Nucleus</keyword>
<keyword id="KW-0597">Phosphoprotein</keyword>
<keyword id="KW-0904">Protein phosphatase</keyword>
<keyword id="KW-1185">Reference proteome</keyword>
<dbReference type="EC" id="3.1.3.48"/>
<dbReference type="EMBL" id="BC129117">
    <property type="protein sequence ID" value="AAI29118.1"/>
    <property type="molecule type" value="mRNA"/>
</dbReference>
<dbReference type="RefSeq" id="NP_001073618.1">
    <property type="nucleotide sequence ID" value="NM_001080149.1"/>
</dbReference>
<dbReference type="RefSeq" id="XP_006252827.1">
    <property type="nucleotide sequence ID" value="XM_006252765.5"/>
</dbReference>
<dbReference type="RefSeq" id="XP_006252829.1">
    <property type="nucleotide sequence ID" value="XM_006252767.5"/>
</dbReference>
<dbReference type="RefSeq" id="XP_008769321.1">
    <property type="nucleotide sequence ID" value="XM_008771099.1"/>
</dbReference>
<dbReference type="RefSeq" id="XP_017455576.1">
    <property type="nucleotide sequence ID" value="XM_017600087.2"/>
</dbReference>
<dbReference type="RefSeq" id="XP_063131432.1">
    <property type="nucleotide sequence ID" value="XM_063275362.1"/>
</dbReference>
<dbReference type="SMR" id="A1L1L3"/>
<dbReference type="FunCoup" id="A1L1L3">
    <property type="interactions" value="150"/>
</dbReference>
<dbReference type="STRING" id="10116.ENSRNOP00000027352"/>
<dbReference type="iPTMnet" id="A1L1L3"/>
<dbReference type="PhosphoSitePlus" id="A1L1L3"/>
<dbReference type="PaxDb" id="10116-ENSRNOP00000027352"/>
<dbReference type="PeptideAtlas" id="A1L1L3"/>
<dbReference type="Ensembl" id="ENSRNOT00000027352.6">
    <property type="protein sequence ID" value="ENSRNOP00000027352.4"/>
    <property type="gene ID" value="ENSRNOG00000020203.7"/>
</dbReference>
<dbReference type="GeneID" id="306281"/>
<dbReference type="KEGG" id="rno:306281"/>
<dbReference type="UCSC" id="RGD:1309812">
    <property type="organism name" value="rat"/>
</dbReference>
<dbReference type="AGR" id="RGD:1309812"/>
<dbReference type="CTD" id="26095"/>
<dbReference type="RGD" id="1309812">
    <property type="gene designation" value="Ptpn20"/>
</dbReference>
<dbReference type="eggNOG" id="KOG0789">
    <property type="taxonomic scope" value="Eukaryota"/>
</dbReference>
<dbReference type="GeneTree" id="ENSGT00940000160066"/>
<dbReference type="HOGENOM" id="CLU_001645_9_5_1"/>
<dbReference type="InParanoid" id="A1L1L3"/>
<dbReference type="OMA" id="TQMRKQR"/>
<dbReference type="OrthoDB" id="165498at2759"/>
<dbReference type="PhylomeDB" id="A1L1L3"/>
<dbReference type="TreeFam" id="TF315573"/>
<dbReference type="PRO" id="PR:A1L1L3"/>
<dbReference type="Proteomes" id="UP000002494">
    <property type="component" value="Chromosome 16"/>
</dbReference>
<dbReference type="Bgee" id="ENSRNOG00000020203">
    <property type="expression patterns" value="Expressed in testis"/>
</dbReference>
<dbReference type="GO" id="GO:0005813">
    <property type="term" value="C:centrosome"/>
    <property type="evidence" value="ECO:0007669"/>
    <property type="project" value="UniProtKB-SubCell"/>
</dbReference>
<dbReference type="GO" id="GO:0005737">
    <property type="term" value="C:cytoplasm"/>
    <property type="evidence" value="ECO:0000318"/>
    <property type="project" value="GO_Central"/>
</dbReference>
<dbReference type="GO" id="GO:0005874">
    <property type="term" value="C:microtubule"/>
    <property type="evidence" value="ECO:0007669"/>
    <property type="project" value="UniProtKB-KW"/>
</dbReference>
<dbReference type="GO" id="GO:0005634">
    <property type="term" value="C:nucleus"/>
    <property type="evidence" value="ECO:0007669"/>
    <property type="project" value="UniProtKB-SubCell"/>
</dbReference>
<dbReference type="GO" id="GO:0004721">
    <property type="term" value="F:phosphoprotein phosphatase activity"/>
    <property type="evidence" value="ECO:0007669"/>
    <property type="project" value="UniProtKB-KW"/>
</dbReference>
<dbReference type="GO" id="GO:0001946">
    <property type="term" value="P:lymphangiogenesis"/>
    <property type="evidence" value="ECO:0000318"/>
    <property type="project" value="GO_Central"/>
</dbReference>
<dbReference type="FunFam" id="3.90.190.10:FF:000102">
    <property type="entry name" value="Receptor-type tyrosine-protein phosphatase"/>
    <property type="match status" value="1"/>
</dbReference>
<dbReference type="Gene3D" id="3.90.190.10">
    <property type="entry name" value="Protein tyrosine phosphatase superfamily"/>
    <property type="match status" value="1"/>
</dbReference>
<dbReference type="InterPro" id="IPR052074">
    <property type="entry name" value="NonRcpt_TyrProt_Phosphatase"/>
</dbReference>
<dbReference type="InterPro" id="IPR029021">
    <property type="entry name" value="Prot-tyrosine_phosphatase-like"/>
</dbReference>
<dbReference type="InterPro" id="IPR000242">
    <property type="entry name" value="PTP_cat"/>
</dbReference>
<dbReference type="InterPro" id="IPR016130">
    <property type="entry name" value="Tyr_Pase_AS"/>
</dbReference>
<dbReference type="InterPro" id="IPR003595">
    <property type="entry name" value="Tyr_Pase_cat"/>
</dbReference>
<dbReference type="InterPro" id="IPR000387">
    <property type="entry name" value="Tyr_Pase_dom"/>
</dbReference>
<dbReference type="PANTHER" id="PTHR46900:SF4">
    <property type="entry name" value="FERM AND PDZ DOMAIN CONTAINING 2"/>
    <property type="match status" value="1"/>
</dbReference>
<dbReference type="PANTHER" id="PTHR46900">
    <property type="entry name" value="TYROSINE-PROTEIN PHOSPHATASE NON-RECEPTOR TYPE 13"/>
    <property type="match status" value="1"/>
</dbReference>
<dbReference type="Pfam" id="PF00102">
    <property type="entry name" value="Y_phosphatase"/>
    <property type="match status" value="1"/>
</dbReference>
<dbReference type="PRINTS" id="PR00700">
    <property type="entry name" value="PRTYPHPHTASE"/>
</dbReference>
<dbReference type="SMART" id="SM00194">
    <property type="entry name" value="PTPc"/>
    <property type="match status" value="1"/>
</dbReference>
<dbReference type="SMART" id="SM00404">
    <property type="entry name" value="PTPc_motif"/>
    <property type="match status" value="1"/>
</dbReference>
<dbReference type="SUPFAM" id="SSF52799">
    <property type="entry name" value="(Phosphotyrosine protein) phosphatases II"/>
    <property type="match status" value="1"/>
</dbReference>
<dbReference type="PROSITE" id="PS00383">
    <property type="entry name" value="TYR_PHOSPHATASE_1"/>
    <property type="match status" value="1"/>
</dbReference>
<dbReference type="PROSITE" id="PS50056">
    <property type="entry name" value="TYR_PHOSPHATASE_2"/>
    <property type="match status" value="1"/>
</dbReference>
<dbReference type="PROSITE" id="PS50055">
    <property type="entry name" value="TYR_PHOSPHATASE_PTP"/>
    <property type="match status" value="1"/>
</dbReference>
<sequence length="421" mass="48580">MSSPGNVRQKHGRDNDEHEGDSDDLNLQKSLPSSSQQKTPTKPVFGNKVNSESVKTSHHMSFSNKYDLVFPEPVESDNDETLWDVRDLSHRNRWSSVDPESAGPSKTVSTVLSESSTDTAVSERELTQLAQIRPLIFNSSSRAALRDCLKALQKKEELDIIREFLELEEMIPPDDFKSGYELQNRDKNRYRDILPYDSTRVPLGKNKDYINASYIRIVNHEEEYFYIATQGPLPDTIEDFWQMVLENNCNVIAMITREIEGGVIKCCSYWPVSLKEPLEFKHFHVLLENFQITQYFVIRIFQIVKKSTGKSHSVKHLQFIKWPDHGTPASADFFIKYVRYVRKSHITGPLLVHCSAGVGRTGVFICVDVVFCTIEKNYSFNIMNIVTQMRKQRFGMIQTKEQYQFCYEIVLEVLQNLLALN</sequence>
<organism>
    <name type="scientific">Rattus norvegicus</name>
    <name type="common">Rat</name>
    <dbReference type="NCBI Taxonomy" id="10116"/>
    <lineage>
        <taxon>Eukaryota</taxon>
        <taxon>Metazoa</taxon>
        <taxon>Chordata</taxon>
        <taxon>Craniata</taxon>
        <taxon>Vertebrata</taxon>
        <taxon>Euteleostomi</taxon>
        <taxon>Mammalia</taxon>
        <taxon>Eutheria</taxon>
        <taxon>Euarchontoglires</taxon>
        <taxon>Glires</taxon>
        <taxon>Rodentia</taxon>
        <taxon>Myomorpha</taxon>
        <taxon>Muroidea</taxon>
        <taxon>Muridae</taxon>
        <taxon>Murinae</taxon>
        <taxon>Rattus</taxon>
    </lineage>
</organism>
<reference key="1">
    <citation type="journal article" date="2004" name="Genome Res.">
        <title>The status, quality, and expansion of the NIH full-length cDNA project: the Mammalian Gene Collection (MGC).</title>
        <authorList>
            <consortium name="The MGC Project Team"/>
        </authorList>
    </citation>
    <scope>NUCLEOTIDE SEQUENCE [LARGE SCALE MRNA]</scope>
    <source>
        <tissue>Testis</tissue>
    </source>
</reference>
<reference key="2">
    <citation type="journal article" date="2006" name="Proc. Natl. Acad. Sci. U.S.A.">
        <title>Quantitative phosphoproteomics of vasopressin-sensitive renal cells: regulation of aquaporin-2 phosphorylation at two sites.</title>
        <authorList>
            <person name="Hoffert J.D."/>
            <person name="Pisitkun T."/>
            <person name="Wang G."/>
            <person name="Shen R.-F."/>
            <person name="Knepper M.A."/>
        </authorList>
    </citation>
    <scope>PHOSPHORYLATION [LARGE SCALE ANALYSIS] AT SER-122</scope>
    <scope>IDENTIFICATION BY MASS SPECTROMETRY [LARGE SCALE ANALYSIS]</scope>
</reference>
<reference key="3">
    <citation type="journal article" date="2012" name="Nat. Commun.">
        <title>Quantitative maps of protein phosphorylation sites across 14 different rat organs and tissues.</title>
        <authorList>
            <person name="Lundby A."/>
            <person name="Secher A."/>
            <person name="Lage K."/>
            <person name="Nordsborg N.B."/>
            <person name="Dmytriyev A."/>
            <person name="Lundby C."/>
            <person name="Olsen J.V."/>
        </authorList>
    </citation>
    <scope>PHOSPHORYLATION [LARGE SCALE ANALYSIS] AT SER-76</scope>
    <scope>IDENTIFICATION BY MASS SPECTROMETRY [LARGE SCALE ANALYSIS]</scope>
</reference>